<evidence type="ECO:0000269" key="1">
    <source>
    </source>
</evidence>
<evidence type="ECO:0000269" key="2">
    <source>
    </source>
</evidence>
<evidence type="ECO:0000269" key="3">
    <source>
    </source>
</evidence>
<evidence type="ECO:0000305" key="4"/>
<evidence type="ECO:0007829" key="5">
    <source>
        <dbReference type="PDB" id="7Q06"/>
    </source>
</evidence>
<name>TPDB1_COMSP</name>
<protein>
    <recommendedName>
        <fullName>Terephthalate 1,2-dioxygenase, terminal oxygenase component subunit beta 1</fullName>
        <shortName>TPADO terminal oxygenase component</shortName>
        <ecNumber evidence="2">1.14.12.15</ecNumber>
    </recommendedName>
    <alternativeName>
        <fullName>TER dioxygenase system</fullName>
        <shortName>TERDOS</shortName>
    </alternativeName>
    <alternativeName>
        <fullName>Terephthalate 1,2-dioxygenase small subunit 1</fullName>
    </alternativeName>
</protein>
<sequence>MINEIQIAAFNAAYAKTVDSDAMEQWPTFFTKDCHYRVTNVDNHAEGLAAGIVWADSQDMLTDRISALREANIYERHRYRHILGLPSIQSGDATQASASTPFMVLRIMHTGETEVFASGEYLDKFTTIDGKLRLQERIAVCDSTVTDTLMALPL</sequence>
<comment type="function">
    <text evidence="1 2 3">Component of the terephthalate 1,2-dioxygenase multicomponent enzyme system which catalyzes the dioxygenation of terephthalate (TER/TPA) to 1,2-dihydroxy-3,5-cyclohexadiene-1,4-dicarboxylic acid (DCD). It can also use 2,5-dicarboxypyridine (PDC) and 1,4-napthalenedicarboxylic acid (NDC) as substrates, and preferentially uses NADPH which is the physiological electron donor.</text>
</comment>
<comment type="catalytic activity">
    <reaction evidence="2">
        <text>terephthalate + NADH + O2 + H(+) = (3S,4R)-3,4-dihydroxycyclohexa-1,5-diene-1,4-dicarboxylate + NAD(+)</text>
        <dbReference type="Rhea" id="RHEA:10312"/>
        <dbReference type="ChEBI" id="CHEBI:15378"/>
        <dbReference type="ChEBI" id="CHEBI:15379"/>
        <dbReference type="ChEBI" id="CHEBI:30043"/>
        <dbReference type="ChEBI" id="CHEBI:57412"/>
        <dbReference type="ChEBI" id="CHEBI:57540"/>
        <dbReference type="ChEBI" id="CHEBI:57945"/>
        <dbReference type="EC" id="1.14.12.15"/>
    </reaction>
</comment>
<comment type="cofactor">
    <cofactor evidence="1 2 3">
        <name>Fe cation</name>
        <dbReference type="ChEBI" id="CHEBI:24875"/>
    </cofactor>
</comment>
<comment type="activity regulation">
    <text evidence="2">Inhibited by EDTA.</text>
</comment>
<comment type="biophysicochemical properties">
    <kinetics>
        <KM evidence="2">72 uM for TPA (at 30 degrees Celsius and at ph 7)</KM>
        <Vmax evidence="2">9.87 umol/min/mg enzyme with TPA as substrate (at 30 degrees Celsius and at ph 7)</Vmax>
    </kinetics>
    <phDependence>
        <text evidence="2">Optimum pH is 7. About 20% of maximum TPADO activity is observed at pH 9, whereas no activity is observed at pH 5.</text>
    </phDependence>
    <temperatureDependence>
        <text evidence="2">Optimum temperature is 30 degrees Celsius. Approximately 60% of maximum TPADO activity is observed at 15 degrees Celsius, and activity is completely lost at 50 degrees Celsius.</text>
    </temperatureDependence>
</comment>
<comment type="subunit">
    <text evidence="1 3 4">Heterotetramer composed of 2 alpha (TphA2I and TphA2II) and 2 beta (TphA3I and TphA3II) subunits (Probable). Part of a multicomponent enzyme system composed of a reductase (TphA1I or TphA1II) and a two-subunit oxygenase component (TphA2I or TphA2II and TphA3I or TphA3II).</text>
</comment>
<comment type="similarity">
    <text evidence="4">Belongs to the bacterial ring-hydroxylating dioxygenase beta subunit family.</text>
</comment>
<keyword id="KW-0002">3D-structure</keyword>
<keyword id="KW-0223">Dioxygenase</keyword>
<keyword id="KW-0520">NAD</keyword>
<keyword id="KW-0560">Oxidoreductase</keyword>
<feature type="chain" id="PRO_0000419004" description="Terephthalate 1,2-dioxygenase, terminal oxygenase component subunit beta 1">
    <location>
        <begin position="1"/>
        <end position="154"/>
    </location>
</feature>
<feature type="helix" evidence="5">
    <location>
        <begin position="4"/>
        <end position="19"/>
    </location>
</feature>
<feature type="helix" evidence="5">
    <location>
        <begin position="23"/>
        <end position="29"/>
    </location>
</feature>
<feature type="strand" evidence="5">
    <location>
        <begin position="30"/>
        <end position="40"/>
    </location>
</feature>
<feature type="helix" evidence="5">
    <location>
        <begin position="41"/>
        <end position="46"/>
    </location>
</feature>
<feature type="strand" evidence="5">
    <location>
        <begin position="52"/>
        <end position="57"/>
    </location>
</feature>
<feature type="helix" evidence="5">
    <location>
        <begin position="58"/>
        <end position="70"/>
    </location>
</feature>
<feature type="strand" evidence="5">
    <location>
        <begin position="77"/>
        <end position="83"/>
    </location>
</feature>
<feature type="strand" evidence="5">
    <location>
        <begin position="87"/>
        <end position="91"/>
    </location>
</feature>
<feature type="strand" evidence="5">
    <location>
        <begin position="96"/>
        <end position="108"/>
    </location>
</feature>
<feature type="strand" evidence="5">
    <location>
        <begin position="113"/>
        <end position="128"/>
    </location>
</feature>
<feature type="strand" evidence="5">
    <location>
        <begin position="131"/>
        <end position="142"/>
    </location>
</feature>
<feature type="strand" evidence="5">
    <location>
        <begin position="144"/>
        <end position="148"/>
    </location>
</feature>
<reference key="1">
    <citation type="journal article" date="2006" name="Appl. Environ. Microbiol.">
        <title>Characterization of the terephthalate degradation genes of Comamonas sp. strain E6.</title>
        <authorList>
            <person name="Sasoh M."/>
            <person name="Masai E."/>
            <person name="Ishibashi S."/>
            <person name="Hara H."/>
            <person name="Kamimura N."/>
            <person name="Miyauchi K."/>
            <person name="Fukuda M."/>
        </authorList>
    </citation>
    <scope>NUCLEOTIDE SEQUENCE [GENOMIC DNA]</scope>
    <scope>FUNCTION AS A TEREPHTHALATE DIOXYGENASE</scope>
    <scope>FUNCTION IN TPA DEGRADATION</scope>
    <scope>SUBUNIT</scope>
    <scope>COFACTOR</scope>
    <source>
        <strain>E6</strain>
    </source>
</reference>
<reference key="2">
    <citation type="journal article" date="1994" name="J. Bacteriol.">
        <title>Terephthalate 1,2-dioxygenase system from Comamonas testosteroni T-2: purification and some properties of the oxygenase component.</title>
        <authorList>
            <person name="Schlafli H.R."/>
            <person name="Weiss M.A."/>
            <person name="Leisinger T."/>
            <person name="Cook A.M."/>
        </authorList>
    </citation>
    <scope>FUNCTION AS A TEREPHTHALATE DIOXYGENASE</scope>
    <scope>SUBSTRATE SPECIFICITY</scope>
    <scope>COFACTOR</scope>
    <scope>SUBUNIT</scope>
    <source>
        <strain>E6</strain>
    </source>
</reference>
<reference key="3">
    <citation type="journal article" date="2008" name="Biosci. Biotechnol. Biochem.">
        <title>Enzymatic properties of terephthalate 1,2-dioxygenase of Comamonas sp. strain E6.</title>
        <authorList>
            <person name="Fukuhara Y."/>
            <person name="Kasai D."/>
            <person name="Katayama Y."/>
            <person name="Fukuda M."/>
            <person name="Masai E."/>
        </authorList>
    </citation>
    <scope>FUNCTION AS A TEREPHTHALATE DIOXYGENASE</scope>
    <scope>CATALYTIC ACTIVITY</scope>
    <scope>BIOPHYSICOCHEMICAL PROPERTIES</scope>
    <scope>ACTIVITY REGULATION</scope>
    <scope>COFACTOR</scope>
    <scope>SUBSTRATE SPECIFICITY</scope>
    <source>
        <strain>E6</strain>
    </source>
</reference>
<gene>
    <name type="primary">tphA3I</name>
</gene>
<dbReference type="EC" id="1.14.12.15" evidence="2"/>
<dbReference type="EMBL" id="AB238678">
    <property type="protein sequence ID" value="BAE47078.1"/>
    <property type="molecule type" value="Genomic_DNA"/>
</dbReference>
<dbReference type="PDB" id="7Q04">
    <property type="method" value="X-ray"/>
    <property type="resolution" value="2.28 A"/>
    <property type="chains" value="A/B/C=1-154"/>
</dbReference>
<dbReference type="PDB" id="7Q05">
    <property type="method" value="X-ray"/>
    <property type="resolution" value="2.08 A"/>
    <property type="chains" value="A/B/C=1-154"/>
</dbReference>
<dbReference type="PDB" id="7Q06">
    <property type="method" value="X-ray"/>
    <property type="resolution" value="1.95 A"/>
    <property type="chains" value="A/B/C=1-154"/>
</dbReference>
<dbReference type="PDBsum" id="7Q04"/>
<dbReference type="PDBsum" id="7Q05"/>
<dbReference type="PDBsum" id="7Q06"/>
<dbReference type="SMR" id="Q3C1E2"/>
<dbReference type="GO" id="GO:0005506">
    <property type="term" value="F:iron ion binding"/>
    <property type="evidence" value="ECO:0000314"/>
    <property type="project" value="UniProtKB"/>
</dbReference>
<dbReference type="GO" id="GO:0018628">
    <property type="term" value="F:terephthalate 1,2-dioxygenase activity"/>
    <property type="evidence" value="ECO:0000314"/>
    <property type="project" value="UniProtKB"/>
</dbReference>
<dbReference type="GO" id="GO:0018963">
    <property type="term" value="P:phthalate metabolic process"/>
    <property type="evidence" value="ECO:0000314"/>
    <property type="project" value="UniProtKB"/>
</dbReference>
<dbReference type="Gene3D" id="3.10.450.50">
    <property type="match status" value="1"/>
</dbReference>
<dbReference type="InterPro" id="IPR032710">
    <property type="entry name" value="NTF2-like_dom_sf"/>
</dbReference>
<dbReference type="InterPro" id="IPR037401">
    <property type="entry name" value="SnoaL-like"/>
</dbReference>
<dbReference type="Pfam" id="PF13577">
    <property type="entry name" value="SnoaL_4"/>
    <property type="match status" value="1"/>
</dbReference>
<dbReference type="SUPFAM" id="SSF54427">
    <property type="entry name" value="NTF2-like"/>
    <property type="match status" value="1"/>
</dbReference>
<organism>
    <name type="scientific">Comamonas sp</name>
    <dbReference type="NCBI Taxonomy" id="34028"/>
    <lineage>
        <taxon>Bacteria</taxon>
        <taxon>Pseudomonadati</taxon>
        <taxon>Pseudomonadota</taxon>
        <taxon>Betaproteobacteria</taxon>
        <taxon>Burkholderiales</taxon>
        <taxon>Comamonadaceae</taxon>
        <taxon>Comamonas</taxon>
    </lineage>
</organism>
<proteinExistence type="evidence at protein level"/>
<accession>Q3C1E2</accession>